<accession>Q07440</accession>
<dbReference type="EMBL" id="L16462">
    <property type="protein sequence ID" value="AAA16886.1"/>
    <property type="molecule type" value="mRNA"/>
</dbReference>
<dbReference type="EMBL" id="U23774">
    <property type="protein sequence ID" value="AAB97953.1"/>
    <property type="molecule type" value="Genomic_DNA"/>
</dbReference>
<dbReference type="EMBL" id="U23773">
    <property type="protein sequence ID" value="AAB97953.1"/>
    <property type="status" value="JOINED"/>
    <property type="molecule type" value="Genomic_DNA"/>
</dbReference>
<dbReference type="CCDS" id="CCDS23391.1"/>
<dbReference type="PIR" id="I49449">
    <property type="entry name" value="I49449"/>
</dbReference>
<dbReference type="RefSeq" id="NP_033872.1">
    <property type="nucleotide sequence ID" value="NM_009742.3"/>
</dbReference>
<dbReference type="PDB" id="2VOF">
    <property type="method" value="X-ray"/>
    <property type="resolution" value="1.80 A"/>
    <property type="chains" value="A/C=1-152"/>
</dbReference>
<dbReference type="PDB" id="2VOG">
    <property type="method" value="X-ray"/>
    <property type="resolution" value="1.90 A"/>
    <property type="chains" value="A=1-152"/>
</dbReference>
<dbReference type="PDB" id="2VOH">
    <property type="method" value="X-ray"/>
    <property type="resolution" value="1.90 A"/>
    <property type="chains" value="A=1-152"/>
</dbReference>
<dbReference type="PDB" id="2VOI">
    <property type="method" value="X-ray"/>
    <property type="resolution" value="2.10 A"/>
    <property type="chains" value="A=1-152"/>
</dbReference>
<dbReference type="PDBsum" id="2VOF"/>
<dbReference type="PDBsum" id="2VOG"/>
<dbReference type="PDBsum" id="2VOH"/>
<dbReference type="PDBsum" id="2VOI"/>
<dbReference type="SMR" id="Q07440"/>
<dbReference type="BioGRID" id="198319">
    <property type="interactions" value="1"/>
</dbReference>
<dbReference type="DIP" id="DIP-29804N"/>
<dbReference type="ELM" id="Q07440"/>
<dbReference type="FunCoup" id="Q07440">
    <property type="interactions" value="156"/>
</dbReference>
<dbReference type="IntAct" id="Q07440">
    <property type="interactions" value="11"/>
</dbReference>
<dbReference type="STRING" id="10090.ENSMUSP00000096086"/>
<dbReference type="BindingDB" id="Q07440"/>
<dbReference type="ChEMBL" id="CHEMBL1293239"/>
<dbReference type="PhosphoSitePlus" id="Q07440"/>
<dbReference type="PaxDb" id="10090-ENSMUSP00000096086"/>
<dbReference type="ProteomicsDB" id="273645"/>
<dbReference type="DNASU" id="12044"/>
<dbReference type="Ensembl" id="ENSMUST00000098485.4">
    <property type="protein sequence ID" value="ENSMUSP00000096086.3"/>
    <property type="gene ID" value="ENSMUSG00000102037.2"/>
</dbReference>
<dbReference type="GeneID" id="12044"/>
<dbReference type="KEGG" id="mmu:12044"/>
<dbReference type="UCSC" id="uc009qzh.1">
    <property type="organism name" value="mouse"/>
</dbReference>
<dbReference type="AGR" id="MGI:102687"/>
<dbReference type="CTD" id="12044"/>
<dbReference type="MGI" id="MGI:102687">
    <property type="gene designation" value="Bcl2a1a"/>
</dbReference>
<dbReference type="VEuPathDB" id="HostDB:ENSMUSG00000102037"/>
<dbReference type="eggNOG" id="KOG4728">
    <property type="taxonomic scope" value="Eukaryota"/>
</dbReference>
<dbReference type="GeneTree" id="ENSGT01130000278292"/>
<dbReference type="HOGENOM" id="CLU_1554763_0_0_1"/>
<dbReference type="InParanoid" id="Q07440"/>
<dbReference type="OMA" id="PRFSYAK"/>
<dbReference type="OrthoDB" id="8856583at2759"/>
<dbReference type="PhylomeDB" id="Q07440"/>
<dbReference type="TreeFam" id="TF315834"/>
<dbReference type="BioGRID-ORCS" id="12044">
    <property type="hits" value="5 hits in 43 CRISPR screens"/>
</dbReference>
<dbReference type="EvolutionaryTrace" id="Q07440"/>
<dbReference type="PRO" id="PR:Q07440"/>
<dbReference type="Proteomes" id="UP000000589">
    <property type="component" value="Chromosome 9"/>
</dbReference>
<dbReference type="RNAct" id="Q07440">
    <property type="molecule type" value="protein"/>
</dbReference>
<dbReference type="Bgee" id="ENSMUSG00000102037">
    <property type="expression patterns" value="Expressed in dermatocranium and 65 other cell types or tissues"/>
</dbReference>
<dbReference type="GO" id="GO:0005737">
    <property type="term" value="C:cytoplasm"/>
    <property type="evidence" value="ECO:0000250"/>
    <property type="project" value="UniProtKB"/>
</dbReference>
<dbReference type="GO" id="GO:0001783">
    <property type="term" value="P:B cell apoptotic process"/>
    <property type="evidence" value="ECO:0000314"/>
    <property type="project" value="MGI"/>
</dbReference>
<dbReference type="GO" id="GO:0001782">
    <property type="term" value="P:B cell homeostasis"/>
    <property type="evidence" value="ECO:0000314"/>
    <property type="project" value="MGI"/>
</dbReference>
<dbReference type="GO" id="GO:0043066">
    <property type="term" value="P:negative regulation of apoptotic process"/>
    <property type="evidence" value="ECO:0000314"/>
    <property type="project" value="UniProtKB"/>
</dbReference>
<dbReference type="GO" id="GO:0002903">
    <property type="term" value="P:negative regulation of B cell apoptotic process"/>
    <property type="evidence" value="ECO:0000314"/>
    <property type="project" value="MGI"/>
</dbReference>
<dbReference type="CDD" id="cd06845">
    <property type="entry name" value="Bcl-2_like"/>
    <property type="match status" value="1"/>
</dbReference>
<dbReference type="FunFam" id="1.10.437.10:FF:000008">
    <property type="entry name" value="Bcl-2-related protein A1"/>
    <property type="match status" value="1"/>
</dbReference>
<dbReference type="Gene3D" id="1.10.437.10">
    <property type="entry name" value="Blc2-like"/>
    <property type="match status" value="1"/>
</dbReference>
<dbReference type="InterPro" id="IPR036834">
    <property type="entry name" value="Bcl-2-like_sf"/>
</dbReference>
<dbReference type="InterPro" id="IPR046371">
    <property type="entry name" value="Bcl-2_BH1-3"/>
</dbReference>
<dbReference type="InterPro" id="IPR026298">
    <property type="entry name" value="Bcl-2_fam"/>
</dbReference>
<dbReference type="InterPro" id="IPR002475">
    <property type="entry name" value="Bcl2-like"/>
</dbReference>
<dbReference type="InterPro" id="IPR020717">
    <property type="entry name" value="Bcl2_BH1_motif_CS"/>
</dbReference>
<dbReference type="InterPro" id="IPR020726">
    <property type="entry name" value="Bcl2_BH2_motif_CS"/>
</dbReference>
<dbReference type="InterPro" id="IPR013282">
    <property type="entry name" value="Bcl2A1"/>
</dbReference>
<dbReference type="PANTHER" id="PTHR11256">
    <property type="entry name" value="BCL-2 RELATED"/>
    <property type="match status" value="1"/>
</dbReference>
<dbReference type="PANTHER" id="PTHR11256:SF10">
    <property type="entry name" value="BCL-2-RELATED PROTEIN A1"/>
    <property type="match status" value="1"/>
</dbReference>
<dbReference type="Pfam" id="PF00452">
    <property type="entry name" value="Bcl-2"/>
    <property type="match status" value="1"/>
</dbReference>
<dbReference type="PRINTS" id="PR01862">
    <property type="entry name" value="BCL2FAMILY"/>
</dbReference>
<dbReference type="PRINTS" id="PR01867">
    <property type="entry name" value="BCL2RLATEDA1"/>
</dbReference>
<dbReference type="SMART" id="SM00337">
    <property type="entry name" value="BCL"/>
    <property type="match status" value="1"/>
</dbReference>
<dbReference type="SUPFAM" id="SSF56854">
    <property type="entry name" value="Bcl-2 inhibitors of programmed cell death"/>
    <property type="match status" value="1"/>
</dbReference>
<dbReference type="PROSITE" id="PS50062">
    <property type="entry name" value="BCL2_FAMILY"/>
    <property type="match status" value="1"/>
</dbReference>
<dbReference type="PROSITE" id="PS01080">
    <property type="entry name" value="BH1"/>
    <property type="match status" value="1"/>
</dbReference>
<dbReference type="PROSITE" id="PS01258">
    <property type="entry name" value="BH2"/>
    <property type="match status" value="1"/>
</dbReference>
<evidence type="ECO:0000250" key="1">
    <source>
        <dbReference type="UniProtKB" id="Q16548"/>
    </source>
</evidence>
<evidence type="ECO:0000269" key="2">
    <source>
    </source>
</evidence>
<evidence type="ECO:0000305" key="3"/>
<evidence type="ECO:0007829" key="4">
    <source>
        <dbReference type="PDB" id="2VOF"/>
    </source>
</evidence>
<keyword id="KW-0002">3D-structure</keyword>
<keyword id="KW-0053">Apoptosis</keyword>
<keyword id="KW-0963">Cytoplasm</keyword>
<keyword id="KW-1185">Reference proteome</keyword>
<feature type="chain" id="PRO_0000143095" description="Bcl-2-related protein A1">
    <location>
        <begin position="1"/>
        <end position="172"/>
    </location>
</feature>
<feature type="short sequence motif" description="BH1">
    <location>
        <begin position="77"/>
        <end position="97"/>
    </location>
</feature>
<feature type="short sequence motif" description="BH2">
    <location>
        <begin position="132"/>
        <end position="147"/>
    </location>
</feature>
<feature type="helix" evidence="4">
    <location>
        <begin position="1"/>
        <end position="21"/>
    </location>
</feature>
<feature type="helix" evidence="4">
    <location>
        <begin position="32"/>
        <end position="51"/>
    </location>
</feature>
<feature type="helix" evidence="4">
    <location>
        <begin position="53"/>
        <end position="56"/>
    </location>
</feature>
<feature type="helix" evidence="4">
    <location>
        <begin position="64"/>
        <end position="79"/>
    </location>
</feature>
<feature type="helix" evidence="4">
    <location>
        <begin position="86"/>
        <end position="105"/>
    </location>
</feature>
<feature type="helix" evidence="4">
    <location>
        <begin position="114"/>
        <end position="136"/>
    </location>
</feature>
<feature type="turn" evidence="4">
    <location>
        <begin position="137"/>
        <end position="142"/>
    </location>
</feature>
<feature type="helix" evidence="4">
    <location>
        <begin position="143"/>
        <end position="147"/>
    </location>
</feature>
<name>B2LA1_MOUSE</name>
<gene>
    <name type="primary">Bcl2a1</name>
    <name type="synonym">A1</name>
    <name type="synonym">Bcl2a1a</name>
    <name type="synonym">Bfl1</name>
</gene>
<proteinExistence type="evidence at protein level"/>
<sequence>MAESELMHIHSLAEHYLQYVLQVPAFESAPSQACRVLQRVAFSVQKEVEKNLKSYLDDFHVESIDTARIIFNQVMEKEFEDGIINWGRIVTIFAFGGVLLKKLPQEQIALDVCAYKQVSSFVAEFIMNNTGEWIRQNGGWEDGFIKKFEPKSGWLTFLQMTGQIWEMLFLLK</sequence>
<protein>
    <recommendedName>
        <fullName>Bcl-2-related protein A1</fullName>
    </recommendedName>
    <alternativeName>
        <fullName>A1-A</fullName>
    </alternativeName>
    <alternativeName>
        <fullName>Hemopoietic-specific early response protein</fullName>
    </alternativeName>
    <alternativeName>
        <fullName>Protein BFL-1</fullName>
    </alternativeName>
</protein>
<comment type="function">
    <text evidence="2">Retards apoptosis induced by IL-3 deprivation. May function in the response of hemopoietic cells to external signals and in maintaining endothelial survival during infection. Can inhibit apoptosis induced by serum starvation in the mammary epithelial cell line HC11 (PubMed:11888890).</text>
</comment>
<comment type="subunit">
    <text evidence="1 2">Interacts directly with BCL2L11/BIM and PMAIP1 (By similarity). Interacts directly with BAK1, BID, BMF and BBC3. Interacts with BOP (By similarity). Interacts with isoform 3, isoform 4 and isoform 5 of ING4. Interacts with UBQLN4 (By similarity).</text>
</comment>
<comment type="interaction">
    <interactant intactId="EBI-707754">
        <id>Q07440</id>
    </interactant>
    <interactant intactId="EBI-822441">
        <id>O08734</id>
        <label>Bak1</label>
    </interactant>
    <organismsDiffer>false</organismsDiffer>
    <experiments>2</experiments>
</comment>
<comment type="interaction">
    <interactant intactId="EBI-707754">
        <id>Q07440</id>
    </interactant>
    <interactant intactId="EBI-727801">
        <id>Q99ML1</id>
        <label>Bbc3</label>
    </interactant>
    <organismsDiffer>false</organismsDiffer>
    <experiments>2</experiments>
</comment>
<comment type="interaction">
    <interactant intactId="EBI-707754">
        <id>Q07440</id>
    </interactant>
    <interactant intactId="EBI-783400">
        <id>P70444</id>
        <label>Bid</label>
    </interactant>
    <organismsDiffer>false</organismsDiffer>
    <experiments>2</experiments>
</comment>
<comment type="interaction">
    <interactant intactId="EBI-707754">
        <id>Q07440</id>
    </interactant>
    <interactant intactId="EBI-708032">
        <id>Q91ZE9</id>
        <label>Bmf</label>
    </interactant>
    <organismsDiffer>false</organismsDiffer>
    <experiments>2</experiments>
</comment>
<comment type="interaction">
    <interactant intactId="EBI-707754">
        <id>Q07440</id>
    </interactant>
    <interactant intactId="EBI-526406">
        <id>O43521</id>
        <label>BCL2L11</label>
    </interactant>
    <organismsDiffer>true</organismsDiffer>
    <experiments>2</experiments>
</comment>
<comment type="interaction">
    <interactant intactId="EBI-707754">
        <id>Q07440</id>
    </interactant>
    <interactant intactId="EBI-519672">
        <id>P55957</id>
        <label>BID</label>
    </interactant>
    <organismsDiffer>true</organismsDiffer>
    <experiments>3</experiments>
</comment>
<comment type="subcellular location">
    <subcellularLocation>
        <location evidence="1">Cytoplasm</location>
    </subcellularLocation>
</comment>
<comment type="tissue specificity">
    <text>Expressed in hemopoietic tissues, including bone marrow, spleen and thymus.</text>
</comment>
<comment type="induction">
    <text>By granulocyte-macrophage colony-stimulating factor and LPS in macrophages.</text>
</comment>
<comment type="similarity">
    <text evidence="3">Belongs to the Bcl-2 family.</text>
</comment>
<organism>
    <name type="scientific">Mus musculus</name>
    <name type="common">Mouse</name>
    <dbReference type="NCBI Taxonomy" id="10090"/>
    <lineage>
        <taxon>Eukaryota</taxon>
        <taxon>Metazoa</taxon>
        <taxon>Chordata</taxon>
        <taxon>Craniata</taxon>
        <taxon>Vertebrata</taxon>
        <taxon>Euteleostomi</taxon>
        <taxon>Mammalia</taxon>
        <taxon>Eutheria</taxon>
        <taxon>Euarchontoglires</taxon>
        <taxon>Glires</taxon>
        <taxon>Rodentia</taxon>
        <taxon>Myomorpha</taxon>
        <taxon>Muroidea</taxon>
        <taxon>Muridae</taxon>
        <taxon>Murinae</taxon>
        <taxon>Mus</taxon>
        <taxon>Mus</taxon>
    </lineage>
</organism>
<reference key="1">
    <citation type="journal article" date="1993" name="J. Immunol.">
        <title>Characterization of A1, a novel hemopoietic-specific early-response gene with sequence similarity to bcl-2.</title>
        <authorList>
            <person name="Lin E.Y."/>
            <person name="Orlofsky A."/>
            <person name="Berger M.S."/>
            <person name="Prystowsky M.B."/>
        </authorList>
    </citation>
    <scope>NUCLEOTIDE SEQUENCE [MRNA]</scope>
    <source>
        <strain>CBA/J</strain>
        <tissue>Bone marrow</tissue>
    </source>
</reference>
<reference key="2">
    <citation type="journal article" date="1998" name="Int. Immunol.">
        <title>Multiple gene duplication and expression of mouse bcl-2-related genes, A1.</title>
        <authorList>
            <person name="Hatakeyama S."/>
            <person name="Hamasaki A."/>
            <person name="Negishi I."/>
            <person name="Loh D.Y."/>
            <person name="Sendo F."/>
            <person name="Nakayama K."/>
            <person name="Nakayama K."/>
        </authorList>
    </citation>
    <scope>NUCLEOTIDE SEQUENCE [GENOMIC DNA]</scope>
    <source>
        <strain>129/Sv</strain>
        <tissue>Liver</tissue>
    </source>
</reference>
<reference key="3">
    <citation type="journal article" date="2002" name="Cancer Res.">
        <title>Mouse ING1 homologue, a protein interacting with A1, enhances cell death and is inhibited by A1 in mammary epithelial cells.</title>
        <authorList>
            <person name="Ha S."/>
            <person name="Lee S."/>
            <person name="Chung M."/>
            <person name="Choi Y."/>
        </authorList>
    </citation>
    <scope>FUNCTION</scope>
    <scope>INTERACTION WITH ING4</scope>
</reference>
<reference key="4">
    <citation type="journal article" date="2008" name="Structure">
        <title>Structural plasticity underpins promiscuous binding of the prosurvival protein A1.</title>
        <authorList>
            <person name="Smits C."/>
            <person name="Czabotar P.E."/>
            <person name="Hinds M.G."/>
            <person name="Day C.L."/>
        </authorList>
    </citation>
    <scope>X-RAY CRYSTALLOGRAPHY (1.8 ANGSTROMS) OF 1-152 IN COMPLEXES WITH BAK1; BID; BMF AND BBC3</scope>
</reference>